<evidence type="ECO:0000250" key="1"/>
<evidence type="ECO:0000305" key="2"/>
<keyword id="KW-0249">Electron transport</keyword>
<keyword id="KW-0274">FAD</keyword>
<keyword id="KW-0285">Flavoprotein</keyword>
<keyword id="KW-0496">Mitochondrion</keyword>
<keyword id="KW-1185">Reference proteome</keyword>
<keyword id="KW-0679">Respiratory chain</keyword>
<keyword id="KW-0809">Transit peptide</keyword>
<keyword id="KW-0813">Transport</keyword>
<sequence length="356" mass="40475">MLKNLSKGFPSLINKRSFSTINENPLTRIHHGSRTQTTGLVATVFGATGFTGRYLVQLLARTGIQVVVPYRCEDEGFRDLKVLGELGQIIPVRFDIRDSESIERAISHSNIVINMAGRDYETRNFSLDDINVHAASRIADLSKNVEKYIHVSTLRASEDSPSHFSRSKAIGEKLTREIIPNCTVVRPSIIFGDEDKFINKWSKVSQNWPFIPRYNQQHKIQPLHCYDLASGILSILETPGTSGKVYEFAGDEVFTWDEFLDMIIDGTAQYSKLNIPVSNDFMKFISEHLLERFARNPNFIKDQIDYHNQDMTTTVGALTLKDLNVTTTPIQEKLIRLSRMYRPGKFFNAIANPQNK</sequence>
<name>NDUA9_DICDI</name>
<protein>
    <recommendedName>
        <fullName>NADH dehydrogenase [ubiquinone] 1 alpha subcomplex subunit 9, mitochondrial</fullName>
    </recommendedName>
</protein>
<gene>
    <name type="primary">ndufa9</name>
    <name type="ORF">DDB_G0272266</name>
</gene>
<reference key="1">
    <citation type="journal article" date="2002" name="Nature">
        <title>Sequence and analysis of chromosome 2 of Dictyostelium discoideum.</title>
        <authorList>
            <person name="Gloeckner G."/>
            <person name="Eichinger L."/>
            <person name="Szafranski K."/>
            <person name="Pachebat J.A."/>
            <person name="Bankier A.T."/>
            <person name="Dear P.H."/>
            <person name="Lehmann R."/>
            <person name="Baumgart C."/>
            <person name="Parra G."/>
            <person name="Abril J.F."/>
            <person name="Guigo R."/>
            <person name="Kumpf K."/>
            <person name="Tunggal B."/>
            <person name="Cox E.C."/>
            <person name="Quail M.A."/>
            <person name="Platzer M."/>
            <person name="Rosenthal A."/>
            <person name="Noegel A.A."/>
        </authorList>
    </citation>
    <scope>NUCLEOTIDE SEQUENCE [LARGE SCALE GENOMIC DNA]</scope>
    <source>
        <strain>AX4</strain>
    </source>
</reference>
<reference key="2">
    <citation type="journal article" date="2005" name="Nature">
        <title>The genome of the social amoeba Dictyostelium discoideum.</title>
        <authorList>
            <person name="Eichinger L."/>
            <person name="Pachebat J.A."/>
            <person name="Gloeckner G."/>
            <person name="Rajandream M.A."/>
            <person name="Sucgang R."/>
            <person name="Berriman M."/>
            <person name="Song J."/>
            <person name="Olsen R."/>
            <person name="Szafranski K."/>
            <person name="Xu Q."/>
            <person name="Tunggal B."/>
            <person name="Kummerfeld S."/>
            <person name="Madera M."/>
            <person name="Konfortov B.A."/>
            <person name="Rivero F."/>
            <person name="Bankier A.T."/>
            <person name="Lehmann R."/>
            <person name="Hamlin N."/>
            <person name="Davies R."/>
            <person name="Gaudet P."/>
            <person name="Fey P."/>
            <person name="Pilcher K."/>
            <person name="Chen G."/>
            <person name="Saunders D."/>
            <person name="Sodergren E.J."/>
            <person name="Davis P."/>
            <person name="Kerhornou A."/>
            <person name="Nie X."/>
            <person name="Hall N."/>
            <person name="Anjard C."/>
            <person name="Hemphill L."/>
            <person name="Bason N."/>
            <person name="Farbrother P."/>
            <person name="Desany B."/>
            <person name="Just E."/>
            <person name="Morio T."/>
            <person name="Rost R."/>
            <person name="Churcher C.M."/>
            <person name="Cooper J."/>
            <person name="Haydock S."/>
            <person name="van Driessche N."/>
            <person name="Cronin A."/>
            <person name="Goodhead I."/>
            <person name="Muzny D.M."/>
            <person name="Mourier T."/>
            <person name="Pain A."/>
            <person name="Lu M."/>
            <person name="Harper D."/>
            <person name="Lindsay R."/>
            <person name="Hauser H."/>
            <person name="James K.D."/>
            <person name="Quiles M."/>
            <person name="Madan Babu M."/>
            <person name="Saito T."/>
            <person name="Buchrieser C."/>
            <person name="Wardroper A."/>
            <person name="Felder M."/>
            <person name="Thangavelu M."/>
            <person name="Johnson D."/>
            <person name="Knights A."/>
            <person name="Loulseged H."/>
            <person name="Mungall K.L."/>
            <person name="Oliver K."/>
            <person name="Price C."/>
            <person name="Quail M.A."/>
            <person name="Urushihara H."/>
            <person name="Hernandez J."/>
            <person name="Rabbinowitsch E."/>
            <person name="Steffen D."/>
            <person name="Sanders M."/>
            <person name="Ma J."/>
            <person name="Kohara Y."/>
            <person name="Sharp S."/>
            <person name="Simmonds M.N."/>
            <person name="Spiegler S."/>
            <person name="Tivey A."/>
            <person name="Sugano S."/>
            <person name="White B."/>
            <person name="Walker D."/>
            <person name="Woodward J.R."/>
            <person name="Winckler T."/>
            <person name="Tanaka Y."/>
            <person name="Shaulsky G."/>
            <person name="Schleicher M."/>
            <person name="Weinstock G.M."/>
            <person name="Rosenthal A."/>
            <person name="Cox E.C."/>
            <person name="Chisholm R.L."/>
            <person name="Gibbs R.A."/>
            <person name="Loomis W.F."/>
            <person name="Platzer M."/>
            <person name="Kay R.R."/>
            <person name="Williams J.G."/>
            <person name="Dear P.H."/>
            <person name="Noegel A.A."/>
            <person name="Barrell B.G."/>
            <person name="Kuspa A."/>
        </authorList>
    </citation>
    <scope>NUCLEOTIDE SEQUENCE [LARGE SCALE GENOMIC DNA]</scope>
    <source>
        <strain>AX4</strain>
    </source>
</reference>
<organism>
    <name type="scientific">Dictyostelium discoideum</name>
    <name type="common">Social amoeba</name>
    <dbReference type="NCBI Taxonomy" id="44689"/>
    <lineage>
        <taxon>Eukaryota</taxon>
        <taxon>Amoebozoa</taxon>
        <taxon>Evosea</taxon>
        <taxon>Eumycetozoa</taxon>
        <taxon>Dictyostelia</taxon>
        <taxon>Dictyosteliales</taxon>
        <taxon>Dictyosteliaceae</taxon>
        <taxon>Dictyostelium</taxon>
    </lineage>
</organism>
<comment type="function">
    <text evidence="1">Accessory subunit of the mitochondrial membrane respiratory chain NADH dehydrogenase (Complex I), that is believed not to be involved in catalysis. Complex I functions in the transfer of electrons from NADH to the respiratory chain. The immediate electron acceptor for the enzyme is believed to be ubiquinone (By similarity).</text>
</comment>
<comment type="cofactor">
    <cofactor evidence="1">
        <name>FAD</name>
        <dbReference type="ChEBI" id="CHEBI:57692"/>
    </cofactor>
    <text evidence="1">Binds 1 FAD per subunit.</text>
</comment>
<comment type="subunit">
    <text evidence="1">Complex I is composed of about 45 different subunits. This a component of the hydrophobic protein fraction (By similarity).</text>
</comment>
<comment type="subcellular location">
    <subcellularLocation>
        <location evidence="1">Mitochondrion matrix</location>
    </subcellularLocation>
</comment>
<comment type="similarity">
    <text evidence="2">Belongs to the complex I NDUFA9 subunit family.</text>
</comment>
<feature type="transit peptide" description="Mitochondrion" evidence="1">
    <location>
        <begin position="1"/>
        <end status="unknown"/>
    </location>
</feature>
<feature type="chain" id="PRO_0000328421" description="NADH dehydrogenase [ubiquinone] 1 alpha subcomplex subunit 9, mitochondrial">
    <location>
        <begin status="unknown"/>
        <end position="356"/>
    </location>
</feature>
<proteinExistence type="inferred from homology"/>
<accession>Q559Z0</accession>
<accession>Q86A37</accession>
<dbReference type="EMBL" id="AAFI02000008">
    <property type="protein sequence ID" value="EAL71285.1"/>
    <property type="molecule type" value="Genomic_DNA"/>
</dbReference>
<dbReference type="RefSeq" id="XP_645194.1">
    <property type="nucleotide sequence ID" value="XM_640102.1"/>
</dbReference>
<dbReference type="SMR" id="Q559Z0"/>
<dbReference type="FunCoup" id="Q559Z0">
    <property type="interactions" value="826"/>
</dbReference>
<dbReference type="STRING" id="44689.Q559Z0"/>
<dbReference type="PaxDb" id="44689-DDB0302549"/>
<dbReference type="EnsemblProtists" id="EAL71285">
    <property type="protein sequence ID" value="EAL71285"/>
    <property type="gene ID" value="DDB_G0272266"/>
</dbReference>
<dbReference type="GeneID" id="8618366"/>
<dbReference type="KEGG" id="ddi:DDB_G0272266"/>
<dbReference type="dictyBase" id="DDB_G0272266">
    <property type="gene designation" value="ndufa9"/>
</dbReference>
<dbReference type="VEuPathDB" id="AmoebaDB:DDB_G0272266"/>
<dbReference type="eggNOG" id="KOG2865">
    <property type="taxonomic scope" value="Eukaryota"/>
</dbReference>
<dbReference type="HOGENOM" id="CLU_007383_6_4_1"/>
<dbReference type="InParanoid" id="Q559Z0"/>
<dbReference type="OMA" id="PEDQFTN"/>
<dbReference type="PhylomeDB" id="Q559Z0"/>
<dbReference type="Reactome" id="R-DDI-6799198">
    <property type="pathway name" value="Complex I biogenesis"/>
</dbReference>
<dbReference type="PRO" id="PR:Q559Z0"/>
<dbReference type="Proteomes" id="UP000002195">
    <property type="component" value="Chromosome 2"/>
</dbReference>
<dbReference type="GO" id="GO:0005759">
    <property type="term" value="C:mitochondrial matrix"/>
    <property type="evidence" value="ECO:0007669"/>
    <property type="project" value="UniProtKB-SubCell"/>
</dbReference>
<dbReference type="GO" id="GO:0005739">
    <property type="term" value="C:mitochondrion"/>
    <property type="evidence" value="ECO:0000318"/>
    <property type="project" value="GO_Central"/>
</dbReference>
<dbReference type="GO" id="GO:0045271">
    <property type="term" value="C:respiratory chain complex I"/>
    <property type="evidence" value="ECO:0000250"/>
    <property type="project" value="dictyBase"/>
</dbReference>
<dbReference type="GO" id="GO:0003954">
    <property type="term" value="F:NADH dehydrogenase activity"/>
    <property type="evidence" value="ECO:0000250"/>
    <property type="project" value="dictyBase"/>
</dbReference>
<dbReference type="GO" id="GO:0044877">
    <property type="term" value="F:protein-containing complex binding"/>
    <property type="evidence" value="ECO:0000318"/>
    <property type="project" value="GO_Central"/>
</dbReference>
<dbReference type="GO" id="GO:0006744">
    <property type="term" value="P:ubiquinone biosynthetic process"/>
    <property type="evidence" value="ECO:0000318"/>
    <property type="project" value="GO_Central"/>
</dbReference>
<dbReference type="CDD" id="cd05271">
    <property type="entry name" value="NDUFA9_like_SDR_a"/>
    <property type="match status" value="1"/>
</dbReference>
<dbReference type="Gene3D" id="3.40.50.720">
    <property type="entry name" value="NAD(P)-binding Rossmann-like Domain"/>
    <property type="match status" value="1"/>
</dbReference>
<dbReference type="InterPro" id="IPR051207">
    <property type="entry name" value="ComplexI_NDUFA9_subunit"/>
</dbReference>
<dbReference type="InterPro" id="IPR036291">
    <property type="entry name" value="NAD(P)-bd_dom_sf"/>
</dbReference>
<dbReference type="InterPro" id="IPR029903">
    <property type="entry name" value="RmlD-like-bd"/>
</dbReference>
<dbReference type="PANTHER" id="PTHR12126:SF11">
    <property type="entry name" value="NADH DEHYDROGENASE [UBIQUINONE] 1 ALPHA SUBCOMPLEX SUBUNIT 9, MITOCHONDRIAL"/>
    <property type="match status" value="1"/>
</dbReference>
<dbReference type="PANTHER" id="PTHR12126">
    <property type="entry name" value="NADH-UBIQUINONE OXIDOREDUCTASE 39 KDA SUBUNIT-RELATED"/>
    <property type="match status" value="1"/>
</dbReference>
<dbReference type="Pfam" id="PF04321">
    <property type="entry name" value="RmlD_sub_bind"/>
    <property type="match status" value="1"/>
</dbReference>
<dbReference type="SUPFAM" id="SSF51735">
    <property type="entry name" value="NAD(P)-binding Rossmann-fold domains"/>
    <property type="match status" value="1"/>
</dbReference>